<reference key="1">
    <citation type="journal article" date="1995" name="J. Bacteriol.">
        <title>Mycobacterium smegmatis dnaA region and autonomous replication activity.</title>
        <authorList>
            <person name="Rajagopalan M."/>
            <person name="Qin M.H."/>
            <person name="Nash D.R."/>
            <person name="Madiraju M.V.V.S."/>
        </authorList>
    </citation>
    <scope>NUCLEOTIDE SEQUENCE [GENOMIC DNA]</scope>
</reference>
<reference key="2">
    <citation type="submission" date="2006-10" db="EMBL/GenBank/DDBJ databases">
        <authorList>
            <person name="Fleischmann R.D."/>
            <person name="Dodson R.J."/>
            <person name="Haft D.H."/>
            <person name="Merkel J.S."/>
            <person name="Nelson W.C."/>
            <person name="Fraser C.M."/>
        </authorList>
    </citation>
    <scope>NUCLEOTIDE SEQUENCE [LARGE SCALE GENOMIC DNA]</scope>
    <source>
        <strain>ATCC 700084 / mc(2)155</strain>
    </source>
</reference>
<reference key="3">
    <citation type="journal article" date="2007" name="Genome Biol.">
        <title>Interrupted coding sequences in Mycobacterium smegmatis: authentic mutations or sequencing errors?</title>
        <authorList>
            <person name="Deshayes C."/>
            <person name="Perrodou E."/>
            <person name="Gallien S."/>
            <person name="Euphrasie D."/>
            <person name="Schaeffer C."/>
            <person name="Van-Dorsselaer A."/>
            <person name="Poch O."/>
            <person name="Lecompte O."/>
            <person name="Reyrat J.-M."/>
        </authorList>
    </citation>
    <scope>NUCLEOTIDE SEQUENCE [LARGE SCALE GENOMIC DNA]</scope>
    <source>
        <strain>ATCC 700084 / mc(2)155</strain>
    </source>
</reference>
<reference key="4">
    <citation type="journal article" date="2009" name="Genome Res.">
        <title>Ortho-proteogenomics: multiple proteomes investigation through orthology and a new MS-based protocol.</title>
        <authorList>
            <person name="Gallien S."/>
            <person name="Perrodou E."/>
            <person name="Carapito C."/>
            <person name="Deshayes C."/>
            <person name="Reyrat J.-M."/>
            <person name="Van Dorsselaer A."/>
            <person name="Poch O."/>
            <person name="Schaeffer C."/>
            <person name="Lecompte O."/>
        </authorList>
    </citation>
    <scope>NUCLEOTIDE SEQUENCE [LARGE SCALE GENOMIC DNA]</scope>
    <source>
        <strain>ATCC 700084 / mc(2)155</strain>
    </source>
</reference>
<accession>A0R7K0</accession>
<accession>I7FW22</accession>
<accession>P49229</accession>
<comment type="similarity">
    <text evidence="1">Belongs to the bacterial ribosomal protein bL34 family.</text>
</comment>
<evidence type="ECO:0000305" key="1"/>
<evidence type="ECO:0007829" key="2">
    <source>
        <dbReference type="PDB" id="5XYM"/>
    </source>
</evidence>
<sequence length="47" mass="5504">MAKGKRTFQPNNRRRARVHGFRLRMRTRAGRAIVANRRSKGRRALTA</sequence>
<feature type="chain" id="PRO_0000293602" description="Large ribosomal subunit protein bL34">
    <location>
        <begin position="1"/>
        <end position="47"/>
    </location>
</feature>
<feature type="sequence conflict" description="In Ref. 1; AAC43713." evidence="1" ref="1">
    <original>RV</original>
    <variation>LI</variation>
    <location>
        <begin position="17"/>
        <end position="18"/>
    </location>
</feature>
<feature type="sequence conflict" description="In Ref. 1; AAC43713." evidence="1" ref="1">
    <original>L</original>
    <variation>A</variation>
    <location>
        <position position="23"/>
    </location>
</feature>
<feature type="sequence conflict" description="In Ref. 1; AAC43713." evidence="1" ref="1">
    <original>G</original>
    <variation>D</variation>
    <location>
        <position position="30"/>
    </location>
</feature>
<feature type="sequence conflict" description="In Ref. 1; AAC43713." evidence="1" ref="1">
    <original>N</original>
    <variation>H</variation>
    <location>
        <position position="36"/>
    </location>
</feature>
<feature type="sequence conflict" description="In Ref. 1; AAC43713." evidence="1" ref="1">
    <original>L</original>
    <variation>P</variation>
    <location>
        <position position="45"/>
    </location>
</feature>
<feature type="helix" evidence="2">
    <location>
        <begin position="12"/>
        <end position="19"/>
    </location>
</feature>
<feature type="helix" evidence="2">
    <location>
        <begin position="21"/>
        <end position="25"/>
    </location>
</feature>
<feature type="helix" evidence="2">
    <location>
        <begin position="28"/>
        <end position="40"/>
    </location>
</feature>
<name>RL34_MYCS2</name>
<proteinExistence type="evidence at protein level"/>
<protein>
    <recommendedName>
        <fullName evidence="1">Large ribosomal subunit protein bL34</fullName>
    </recommendedName>
    <alternativeName>
        <fullName>50S ribosomal protein L34</fullName>
    </alternativeName>
</protein>
<keyword id="KW-0002">3D-structure</keyword>
<keyword id="KW-1185">Reference proteome</keyword>
<keyword id="KW-0687">Ribonucleoprotein</keyword>
<keyword id="KW-0689">Ribosomal protein</keyword>
<organism>
    <name type="scientific">Mycolicibacterium smegmatis (strain ATCC 700084 / mc(2)155)</name>
    <name type="common">Mycobacterium smegmatis</name>
    <dbReference type="NCBI Taxonomy" id="246196"/>
    <lineage>
        <taxon>Bacteria</taxon>
        <taxon>Bacillati</taxon>
        <taxon>Actinomycetota</taxon>
        <taxon>Actinomycetes</taxon>
        <taxon>Mycobacteriales</taxon>
        <taxon>Mycobacteriaceae</taxon>
        <taxon>Mycolicibacterium</taxon>
    </lineage>
</organism>
<gene>
    <name type="primary">rpmH</name>
    <name type="ordered locus">MSMEG_6946</name>
    <name type="ordered locus">MSMEI_6752</name>
</gene>
<dbReference type="EMBL" id="U17833">
    <property type="protein sequence ID" value="AAC43713.1"/>
    <property type="molecule type" value="Genomic_DNA"/>
</dbReference>
<dbReference type="EMBL" id="CP000480">
    <property type="protein sequence ID" value="ABK71603.1"/>
    <property type="molecule type" value="Genomic_DNA"/>
</dbReference>
<dbReference type="EMBL" id="CP001663">
    <property type="protein sequence ID" value="AFP43178.1"/>
    <property type="molecule type" value="Genomic_DNA"/>
</dbReference>
<dbReference type="RefSeq" id="WP_003898363.1">
    <property type="nucleotide sequence ID" value="NZ_SIJM01000001.1"/>
</dbReference>
<dbReference type="RefSeq" id="YP_891138.1">
    <property type="nucleotide sequence ID" value="NC_008596.1"/>
</dbReference>
<dbReference type="PDB" id="5O60">
    <property type="method" value="EM"/>
    <property type="resolution" value="3.20 A"/>
    <property type="chains" value="d=1-47"/>
</dbReference>
<dbReference type="PDB" id="5O61">
    <property type="method" value="EM"/>
    <property type="resolution" value="3.31 A"/>
    <property type="chains" value="d=1-47"/>
</dbReference>
<dbReference type="PDB" id="5XYM">
    <property type="method" value="EM"/>
    <property type="resolution" value="3.08 A"/>
    <property type="chains" value="2=1-47"/>
</dbReference>
<dbReference type="PDB" id="5ZEB">
    <property type="method" value="EM"/>
    <property type="resolution" value="3.40 A"/>
    <property type="chains" value="5=1-47"/>
</dbReference>
<dbReference type="PDB" id="5ZEP">
    <property type="method" value="EM"/>
    <property type="resolution" value="3.40 A"/>
    <property type="chains" value="2=1-47"/>
</dbReference>
<dbReference type="PDB" id="5ZET">
    <property type="method" value="EM"/>
    <property type="resolution" value="3.20 A"/>
    <property type="chains" value="5=1-47"/>
</dbReference>
<dbReference type="PDB" id="6DZI">
    <property type="method" value="EM"/>
    <property type="resolution" value="3.46 A"/>
    <property type="chains" value="d=2-47"/>
</dbReference>
<dbReference type="PDB" id="6DZP">
    <property type="method" value="EM"/>
    <property type="resolution" value="3.42 A"/>
    <property type="chains" value="d=1-47"/>
</dbReference>
<dbReference type="PDB" id="7XAM">
    <property type="method" value="EM"/>
    <property type="resolution" value="2.80 A"/>
    <property type="chains" value="d=1-47"/>
</dbReference>
<dbReference type="PDB" id="7Y41">
    <property type="method" value="EM"/>
    <property type="resolution" value="4.10 A"/>
    <property type="chains" value="d=1-47"/>
</dbReference>
<dbReference type="PDB" id="8FR8">
    <property type="method" value="EM"/>
    <property type="resolution" value="2.76 A"/>
    <property type="chains" value="0=2-47"/>
</dbReference>
<dbReference type="PDB" id="8KAB">
    <property type="method" value="EM"/>
    <property type="resolution" value="3.30 A"/>
    <property type="chains" value="d=1-47"/>
</dbReference>
<dbReference type="PDB" id="8V9J">
    <property type="method" value="EM"/>
    <property type="resolution" value="3.10 A"/>
    <property type="chains" value="6=1-47"/>
</dbReference>
<dbReference type="PDB" id="8V9K">
    <property type="method" value="EM"/>
    <property type="resolution" value="3.10 A"/>
    <property type="chains" value="6=1-47"/>
</dbReference>
<dbReference type="PDB" id="8V9L">
    <property type="method" value="EM"/>
    <property type="resolution" value="3.00 A"/>
    <property type="chains" value="6=1-47"/>
</dbReference>
<dbReference type="PDB" id="8VIO">
    <property type="method" value="EM"/>
    <property type="resolution" value="3.26 A"/>
    <property type="chains" value="d=1-47"/>
</dbReference>
<dbReference type="PDB" id="8VK0">
    <property type="method" value="EM"/>
    <property type="resolution" value="3.14 A"/>
    <property type="chains" value="d=1-47"/>
</dbReference>
<dbReference type="PDB" id="8VK7">
    <property type="method" value="EM"/>
    <property type="resolution" value="3.09 A"/>
    <property type="chains" value="d=1-47"/>
</dbReference>
<dbReference type="PDB" id="8VKI">
    <property type="method" value="EM"/>
    <property type="resolution" value="2.96 A"/>
    <property type="chains" value="d=1-47"/>
</dbReference>
<dbReference type="PDB" id="8VKW">
    <property type="method" value="EM"/>
    <property type="resolution" value="3.44 A"/>
    <property type="chains" value="d=1-47"/>
</dbReference>
<dbReference type="PDB" id="8VR4">
    <property type="method" value="EM"/>
    <property type="resolution" value="2.80 A"/>
    <property type="chains" value="d=1-47"/>
</dbReference>
<dbReference type="PDB" id="8VR8">
    <property type="method" value="EM"/>
    <property type="resolution" value="3.25 A"/>
    <property type="chains" value="d=1-47"/>
</dbReference>
<dbReference type="PDB" id="8VRL">
    <property type="method" value="EM"/>
    <property type="resolution" value="3.33 A"/>
    <property type="chains" value="d=1-47"/>
</dbReference>
<dbReference type="PDB" id="8WHX">
    <property type="method" value="EM"/>
    <property type="resolution" value="2.80 A"/>
    <property type="chains" value="7=1-47"/>
</dbReference>
<dbReference type="PDB" id="8WHY">
    <property type="method" value="EM"/>
    <property type="resolution" value="2.70 A"/>
    <property type="chains" value="7=1-47"/>
</dbReference>
<dbReference type="PDB" id="8WI7">
    <property type="method" value="EM"/>
    <property type="resolution" value="3.50 A"/>
    <property type="chains" value="7=1-47"/>
</dbReference>
<dbReference type="PDB" id="8WI8">
    <property type="method" value="EM"/>
    <property type="resolution" value="2.70 A"/>
    <property type="chains" value="7=1-47"/>
</dbReference>
<dbReference type="PDB" id="8WIB">
    <property type="method" value="EM"/>
    <property type="resolution" value="3.50 A"/>
    <property type="chains" value="7=1-47"/>
</dbReference>
<dbReference type="PDB" id="8WIC">
    <property type="method" value="EM"/>
    <property type="resolution" value="3.50 A"/>
    <property type="chains" value="7=1-47"/>
</dbReference>
<dbReference type="PDB" id="8XZ3">
    <property type="method" value="EM"/>
    <property type="resolution" value="3.60 A"/>
    <property type="chains" value="d=2-47"/>
</dbReference>
<dbReference type="PDBsum" id="5O60"/>
<dbReference type="PDBsum" id="5O61"/>
<dbReference type="PDBsum" id="5XYM"/>
<dbReference type="PDBsum" id="5ZEB"/>
<dbReference type="PDBsum" id="5ZEP"/>
<dbReference type="PDBsum" id="5ZET"/>
<dbReference type="PDBsum" id="6DZI"/>
<dbReference type="PDBsum" id="6DZP"/>
<dbReference type="PDBsum" id="7XAM"/>
<dbReference type="PDBsum" id="7Y41"/>
<dbReference type="PDBsum" id="8FR8"/>
<dbReference type="PDBsum" id="8KAB"/>
<dbReference type="PDBsum" id="8V9J"/>
<dbReference type="PDBsum" id="8V9K"/>
<dbReference type="PDBsum" id="8V9L"/>
<dbReference type="PDBsum" id="8VIO"/>
<dbReference type="PDBsum" id="8VK0"/>
<dbReference type="PDBsum" id="8VK7"/>
<dbReference type="PDBsum" id="8VKI"/>
<dbReference type="PDBsum" id="8VKW"/>
<dbReference type="PDBsum" id="8VR4"/>
<dbReference type="PDBsum" id="8VR8"/>
<dbReference type="PDBsum" id="8VRL"/>
<dbReference type="PDBsum" id="8WHX"/>
<dbReference type="PDBsum" id="8WHY"/>
<dbReference type="PDBsum" id="8WI7"/>
<dbReference type="PDBsum" id="8WI8"/>
<dbReference type="PDBsum" id="8WIB"/>
<dbReference type="PDBsum" id="8WIC"/>
<dbReference type="PDBsum" id="8XZ3"/>
<dbReference type="EMDB" id="EMD-29397"/>
<dbReference type="EMDB" id="EMD-33096"/>
<dbReference type="EMDB" id="EMD-33599"/>
<dbReference type="EMDB" id="EMD-37007"/>
<dbReference type="EMDB" id="EMD-3750"/>
<dbReference type="EMDB" id="EMD-3751"/>
<dbReference type="EMDB" id="EMD-37551"/>
<dbReference type="EMDB" id="EMD-37552"/>
<dbReference type="EMDB" id="EMD-37559"/>
<dbReference type="EMDB" id="EMD-37560"/>
<dbReference type="EMDB" id="EMD-37562"/>
<dbReference type="EMDB" id="EMD-37563"/>
<dbReference type="EMDB" id="EMD-38788"/>
<dbReference type="EMDB" id="EMD-43074"/>
<dbReference type="EMDB" id="EMD-43075"/>
<dbReference type="EMDB" id="EMD-43076"/>
<dbReference type="EMDB" id="EMD-43267"/>
<dbReference type="EMDB" id="EMD-43294"/>
<dbReference type="EMDB" id="EMD-43305"/>
<dbReference type="EMDB" id="EMD-43317"/>
<dbReference type="EMDB" id="EMD-43333"/>
<dbReference type="EMDB" id="EMD-43476"/>
<dbReference type="EMDB" id="EMD-43477"/>
<dbReference type="EMDB" id="EMD-43484"/>
<dbReference type="EMDB" id="EMD-6789"/>
<dbReference type="EMDB" id="EMD-6920"/>
<dbReference type="EMDB" id="EMD-6921"/>
<dbReference type="EMDB" id="EMD-6922"/>
<dbReference type="EMDB" id="EMD-8932"/>
<dbReference type="EMDB" id="EMD-8937"/>
<dbReference type="SMR" id="A0R7K0"/>
<dbReference type="IntAct" id="A0R7K0">
    <property type="interactions" value="2"/>
</dbReference>
<dbReference type="STRING" id="246196.MSMEG_6946"/>
<dbReference type="PaxDb" id="246196-MSMEI_6752"/>
<dbReference type="GeneID" id="93461514"/>
<dbReference type="KEGG" id="msb:LJ00_34280"/>
<dbReference type="KEGG" id="msg:MSMEI_6752"/>
<dbReference type="KEGG" id="msm:MSMEG_6946"/>
<dbReference type="PATRIC" id="fig|246196.19.peg.6758"/>
<dbReference type="eggNOG" id="COG0230">
    <property type="taxonomic scope" value="Bacteria"/>
</dbReference>
<dbReference type="OrthoDB" id="9804832at2"/>
<dbReference type="Proteomes" id="UP000000757">
    <property type="component" value="Chromosome"/>
</dbReference>
<dbReference type="Proteomes" id="UP000006158">
    <property type="component" value="Chromosome"/>
</dbReference>
<dbReference type="GO" id="GO:1990904">
    <property type="term" value="C:ribonucleoprotein complex"/>
    <property type="evidence" value="ECO:0007669"/>
    <property type="project" value="UniProtKB-KW"/>
</dbReference>
<dbReference type="GO" id="GO:0005840">
    <property type="term" value="C:ribosome"/>
    <property type="evidence" value="ECO:0007669"/>
    <property type="project" value="UniProtKB-KW"/>
</dbReference>
<dbReference type="GO" id="GO:0003735">
    <property type="term" value="F:structural constituent of ribosome"/>
    <property type="evidence" value="ECO:0007669"/>
    <property type="project" value="InterPro"/>
</dbReference>
<dbReference type="GO" id="GO:0006412">
    <property type="term" value="P:translation"/>
    <property type="evidence" value="ECO:0007669"/>
    <property type="project" value="UniProtKB-UniRule"/>
</dbReference>
<dbReference type="FunFam" id="1.10.287.3980:FF:000001">
    <property type="entry name" value="Mitochondrial ribosomal protein L34"/>
    <property type="match status" value="1"/>
</dbReference>
<dbReference type="Gene3D" id="1.10.287.3980">
    <property type="match status" value="1"/>
</dbReference>
<dbReference type="HAMAP" id="MF_00391">
    <property type="entry name" value="Ribosomal_bL34"/>
    <property type="match status" value="1"/>
</dbReference>
<dbReference type="InterPro" id="IPR000271">
    <property type="entry name" value="Ribosomal_bL34"/>
</dbReference>
<dbReference type="InterPro" id="IPR020939">
    <property type="entry name" value="Ribosomal_bL34_CS"/>
</dbReference>
<dbReference type="NCBIfam" id="TIGR01030">
    <property type="entry name" value="rpmH_bact"/>
    <property type="match status" value="1"/>
</dbReference>
<dbReference type="PANTHER" id="PTHR14503:SF4">
    <property type="entry name" value="LARGE RIBOSOMAL SUBUNIT PROTEIN BL34M"/>
    <property type="match status" value="1"/>
</dbReference>
<dbReference type="PANTHER" id="PTHR14503">
    <property type="entry name" value="MITOCHONDRIAL RIBOSOMAL PROTEIN 34 FAMILY MEMBER"/>
    <property type="match status" value="1"/>
</dbReference>
<dbReference type="Pfam" id="PF00468">
    <property type="entry name" value="Ribosomal_L34"/>
    <property type="match status" value="1"/>
</dbReference>
<dbReference type="PROSITE" id="PS00784">
    <property type="entry name" value="RIBOSOMAL_L34"/>
    <property type="match status" value="1"/>
</dbReference>